<dbReference type="EMBL" id="DQ977071">
    <property type="protein sequence ID" value="ABM88006.1"/>
    <property type="molecule type" value="Genomic_DNA"/>
</dbReference>
<dbReference type="SMR" id="A2T6F8"/>
<dbReference type="STRING" id="9545.ENSMNEP00000033026"/>
<dbReference type="Ensembl" id="ENSMNET00000057468.1">
    <property type="protein sequence ID" value="ENSMNEP00000033026.1"/>
    <property type="gene ID" value="ENSMNEG00000039805.1"/>
</dbReference>
<dbReference type="GeneID" id="105474249"/>
<dbReference type="KEGG" id="mni:105474249"/>
<dbReference type="GeneTree" id="ENSGT00940000160855"/>
<dbReference type="OMA" id="MYMQSGN"/>
<dbReference type="OrthoDB" id="5446at314294"/>
<dbReference type="Proteomes" id="UP000233120">
    <property type="component" value="Unassembled WGS sequence"/>
</dbReference>
<dbReference type="Bgee" id="ENSMNEG00000039805">
    <property type="expression patterns" value="Expressed in adult mammalian kidney"/>
</dbReference>
<dbReference type="GO" id="GO:0016604">
    <property type="term" value="C:nuclear body"/>
    <property type="evidence" value="ECO:0007669"/>
    <property type="project" value="Ensembl"/>
</dbReference>
<dbReference type="GO" id="GO:0001228">
    <property type="term" value="F:DNA-binding transcription activator activity, RNA polymerase II-specific"/>
    <property type="evidence" value="ECO:0007669"/>
    <property type="project" value="Ensembl"/>
</dbReference>
<dbReference type="GO" id="GO:0000978">
    <property type="term" value="F:RNA polymerase II cis-regulatory region sequence-specific DNA binding"/>
    <property type="evidence" value="ECO:0007669"/>
    <property type="project" value="TreeGrafter"/>
</dbReference>
<dbReference type="GO" id="GO:0009952">
    <property type="term" value="P:anterior/posterior pattern specification"/>
    <property type="evidence" value="ECO:0007669"/>
    <property type="project" value="Ensembl"/>
</dbReference>
<dbReference type="GO" id="GO:0030326">
    <property type="term" value="P:embryonic limb morphogenesis"/>
    <property type="evidence" value="ECO:0007669"/>
    <property type="project" value="Ensembl"/>
</dbReference>
<dbReference type="GO" id="GO:0120163">
    <property type="term" value="P:negative regulation of cold-induced thermogenesis"/>
    <property type="evidence" value="ECO:0007669"/>
    <property type="project" value="Ensembl"/>
</dbReference>
<dbReference type="GO" id="GO:0050905">
    <property type="term" value="P:neuromuscular process"/>
    <property type="evidence" value="ECO:0007669"/>
    <property type="project" value="Ensembl"/>
</dbReference>
<dbReference type="GO" id="GO:0009954">
    <property type="term" value="P:proximal/distal pattern formation"/>
    <property type="evidence" value="ECO:0007669"/>
    <property type="project" value="Ensembl"/>
</dbReference>
<dbReference type="GO" id="GO:0001501">
    <property type="term" value="P:skeletal system development"/>
    <property type="evidence" value="ECO:0007669"/>
    <property type="project" value="Ensembl"/>
</dbReference>
<dbReference type="GO" id="GO:0021520">
    <property type="term" value="P:spinal cord motor neuron cell fate specification"/>
    <property type="evidence" value="ECO:0007669"/>
    <property type="project" value="Ensembl"/>
</dbReference>
<dbReference type="CDD" id="cd00086">
    <property type="entry name" value="homeodomain"/>
    <property type="match status" value="1"/>
</dbReference>
<dbReference type="FunFam" id="1.10.10.60:FF:000018">
    <property type="entry name" value="Homeobox A10"/>
    <property type="match status" value="1"/>
</dbReference>
<dbReference type="Gene3D" id="1.10.10.60">
    <property type="entry name" value="Homeodomain-like"/>
    <property type="match status" value="1"/>
</dbReference>
<dbReference type="InterPro" id="IPR001356">
    <property type="entry name" value="HD"/>
</dbReference>
<dbReference type="InterPro" id="IPR020479">
    <property type="entry name" value="HD_metazoa"/>
</dbReference>
<dbReference type="InterPro" id="IPR017970">
    <property type="entry name" value="Homeobox_CS"/>
</dbReference>
<dbReference type="InterPro" id="IPR009057">
    <property type="entry name" value="Homeodomain-like_sf"/>
</dbReference>
<dbReference type="InterPro" id="IPR046333">
    <property type="entry name" value="HXA10/ABDB-like"/>
</dbReference>
<dbReference type="PANTHER" id="PTHR45874">
    <property type="entry name" value="HOMEOBOX PROTEIN ABDOMINAL-B"/>
    <property type="match status" value="1"/>
</dbReference>
<dbReference type="PANTHER" id="PTHR45874:SF2">
    <property type="entry name" value="HOMEOBOX PROTEIN HOX-C10"/>
    <property type="match status" value="1"/>
</dbReference>
<dbReference type="Pfam" id="PF00046">
    <property type="entry name" value="Homeodomain"/>
    <property type="match status" value="1"/>
</dbReference>
<dbReference type="PRINTS" id="PR00024">
    <property type="entry name" value="HOMEOBOX"/>
</dbReference>
<dbReference type="SMART" id="SM00389">
    <property type="entry name" value="HOX"/>
    <property type="match status" value="1"/>
</dbReference>
<dbReference type="SUPFAM" id="SSF46689">
    <property type="entry name" value="Homeodomain-like"/>
    <property type="match status" value="1"/>
</dbReference>
<dbReference type="PROSITE" id="PS00027">
    <property type="entry name" value="HOMEOBOX_1"/>
    <property type="match status" value="1"/>
</dbReference>
<dbReference type="PROSITE" id="PS50071">
    <property type="entry name" value="HOMEOBOX_2"/>
    <property type="match status" value="1"/>
</dbReference>
<name>HXC10_MACNE</name>
<sequence length="342" mass="38119">MTCPRNVTPNSYAEPLAAPGGGERYSRSAGMYMQSGSDFNCGVMRGCGLAPSLSKRDEGGSPSLTLNTYPSYLSQLDSWGDPKAAYRLEQPVGRPLSSCSYPPSVKEENVCCMYSAEKRAKSGPEAALYSHPLPESCLGEHEVPVPSYYRASPSYSALDKTPHCSGANDFEAPFEQRASLNPRAEHLESPQLGGKVSFPETPKSDNQTPSPSEIKTEQSLAGPKGSPSESEKERAKTADCSPDTSDNEAKEEIKAENTTGNWLTAKSGRKKRCPYTKHQTLELEKEFLFNMYLTRERRLEISKTINLTDRQVKIWFQNRRMKLKKMNRENRIRELTSNFNFT</sequence>
<proteinExistence type="inferred from homology"/>
<gene>
    <name type="primary">HOXC10</name>
</gene>
<reference key="1">
    <citation type="submission" date="2006-08" db="EMBL/GenBank/DDBJ databases">
        <title>Positive selection in transcription factor genes on the human lineage.</title>
        <authorList>
            <person name="Nickel G.C."/>
            <person name="Tefft D.L."/>
            <person name="Trevarthen K."/>
            <person name="Funt J."/>
            <person name="Adams M.D."/>
        </authorList>
    </citation>
    <scope>NUCLEOTIDE SEQUENCE [GENOMIC DNA]</scope>
</reference>
<evidence type="ECO:0000250" key="1"/>
<evidence type="ECO:0000250" key="2">
    <source>
        <dbReference type="UniProtKB" id="Q9NYD6"/>
    </source>
</evidence>
<evidence type="ECO:0000255" key="3">
    <source>
        <dbReference type="PROSITE-ProRule" id="PRU00108"/>
    </source>
</evidence>
<evidence type="ECO:0000256" key="4">
    <source>
        <dbReference type="SAM" id="MobiDB-lite"/>
    </source>
</evidence>
<evidence type="ECO:0000305" key="5"/>
<keyword id="KW-0217">Developmental protein</keyword>
<keyword id="KW-0238">DNA-binding</keyword>
<keyword id="KW-0371">Homeobox</keyword>
<keyword id="KW-1017">Isopeptide bond</keyword>
<keyword id="KW-0539">Nucleus</keyword>
<keyword id="KW-0597">Phosphoprotein</keyword>
<keyword id="KW-1185">Reference proteome</keyword>
<keyword id="KW-0804">Transcription</keyword>
<keyword id="KW-0805">Transcription regulation</keyword>
<keyword id="KW-0832">Ubl conjugation</keyword>
<organism>
    <name type="scientific">Macaca nemestrina</name>
    <name type="common">Pig-tailed macaque</name>
    <dbReference type="NCBI Taxonomy" id="9545"/>
    <lineage>
        <taxon>Eukaryota</taxon>
        <taxon>Metazoa</taxon>
        <taxon>Chordata</taxon>
        <taxon>Craniata</taxon>
        <taxon>Vertebrata</taxon>
        <taxon>Euteleostomi</taxon>
        <taxon>Mammalia</taxon>
        <taxon>Eutheria</taxon>
        <taxon>Euarchontoglires</taxon>
        <taxon>Primates</taxon>
        <taxon>Haplorrhini</taxon>
        <taxon>Catarrhini</taxon>
        <taxon>Cercopithecidae</taxon>
        <taxon>Cercopithecinae</taxon>
        <taxon>Macaca</taxon>
    </lineage>
</organism>
<accession>A2T6F8</accession>
<protein>
    <recommendedName>
        <fullName>Homeobox protein Hox-C10</fullName>
    </recommendedName>
</protein>
<feature type="chain" id="PRO_0000285430" description="Homeobox protein Hox-C10">
    <location>
        <begin position="1"/>
        <end position="342"/>
    </location>
</feature>
<feature type="DNA-binding region" description="Homeobox" evidence="3">
    <location>
        <begin position="268"/>
        <end position="327"/>
    </location>
</feature>
<feature type="region of interest" description="Disordered" evidence="4">
    <location>
        <begin position="1"/>
        <end position="29"/>
    </location>
</feature>
<feature type="region of interest" description="Disordered" evidence="4">
    <location>
        <begin position="187"/>
        <end position="271"/>
    </location>
</feature>
<feature type="compositionally biased region" description="Polar residues" evidence="4">
    <location>
        <begin position="1"/>
        <end position="11"/>
    </location>
</feature>
<feature type="compositionally biased region" description="Polar residues" evidence="4">
    <location>
        <begin position="204"/>
        <end position="219"/>
    </location>
</feature>
<feature type="modified residue" description="Phosphothreonine" evidence="2">
    <location>
        <position position="8"/>
    </location>
</feature>
<feature type="modified residue" description="Phosphoserine" evidence="2">
    <location>
        <position position="189"/>
    </location>
</feature>
<feature type="cross-link" description="Glycyl lysine isopeptide (Lys-Gly) (interchain with G-Cter in SUMO2)" evidence="2">
    <location>
        <position position="106"/>
    </location>
</feature>
<feature type="cross-link" description="Glycyl lysine isopeptide (Lys-Gly) (interchain with G-Cter in SUMO2)" evidence="2">
    <location>
        <position position="195"/>
    </location>
</feature>
<feature type="cross-link" description="Glycyl lysine isopeptide (Lys-Gly) (interchain with G-Cter in SUMO2)" evidence="2">
    <location>
        <position position="254"/>
    </location>
</feature>
<comment type="function">
    <text evidence="1">Sequence-specific transcription factor which is part of a developmental regulatory system that provides cells with specific positional identities on the anterior-posterior axis.</text>
</comment>
<comment type="subcellular location">
    <subcellularLocation>
        <location evidence="3">Nucleus</location>
    </subcellularLocation>
</comment>
<comment type="similarity">
    <text evidence="5">Belongs to the Abd-B homeobox family.</text>
</comment>